<keyword id="KW-0067">ATP-binding</keyword>
<keyword id="KW-0963">Cytoplasm</keyword>
<keyword id="KW-1015">Disulfide bond</keyword>
<keyword id="KW-0547">Nucleotide-binding</keyword>
<keyword id="KW-1185">Reference proteome</keyword>
<keyword id="KW-0694">RNA-binding</keyword>
<keyword id="KW-0808">Transferase</keyword>
<keyword id="KW-0819">tRNA processing</keyword>
<keyword id="KW-0820">tRNA-binding</keyword>
<evidence type="ECO:0000255" key="1">
    <source>
        <dbReference type="HAMAP-Rule" id="MF_00144"/>
    </source>
</evidence>
<organism>
    <name type="scientific">Streptococcus pneumoniae serotype 2 (strain D39 / NCTC 7466)</name>
    <dbReference type="NCBI Taxonomy" id="373153"/>
    <lineage>
        <taxon>Bacteria</taxon>
        <taxon>Bacillati</taxon>
        <taxon>Bacillota</taxon>
        <taxon>Bacilli</taxon>
        <taxon>Lactobacillales</taxon>
        <taxon>Streptococcaceae</taxon>
        <taxon>Streptococcus</taxon>
    </lineage>
</organism>
<reference key="1">
    <citation type="journal article" date="2007" name="J. Bacteriol.">
        <title>Genome sequence of Avery's virulent serotype 2 strain D39 of Streptococcus pneumoniae and comparison with that of unencapsulated laboratory strain R6.</title>
        <authorList>
            <person name="Lanie J.A."/>
            <person name="Ng W.-L."/>
            <person name="Kazmierczak K.M."/>
            <person name="Andrzejewski T.M."/>
            <person name="Davidsen T.M."/>
            <person name="Wayne K.J."/>
            <person name="Tettelin H."/>
            <person name="Glass J.I."/>
            <person name="Winkler M.E."/>
        </authorList>
    </citation>
    <scope>NUCLEOTIDE SEQUENCE [LARGE SCALE GENOMIC DNA]</scope>
    <source>
        <strain>D39 / NCTC 7466</strain>
    </source>
</reference>
<gene>
    <name evidence="1" type="primary">mnmA</name>
    <name type="synonym">trmU</name>
    <name type="ordered locus">SPD_0127</name>
</gene>
<proteinExistence type="inferred from homology"/>
<name>MNMA_STRP2</name>
<dbReference type="EC" id="2.8.1.13" evidence="1"/>
<dbReference type="EMBL" id="CP000410">
    <property type="protein sequence ID" value="ABJ55053.1"/>
    <property type="molecule type" value="Genomic_DNA"/>
</dbReference>
<dbReference type="RefSeq" id="WP_001282986.1">
    <property type="nucleotide sequence ID" value="NZ_JAMLJR010000002.1"/>
</dbReference>
<dbReference type="SMR" id="Q04MV1"/>
<dbReference type="PaxDb" id="373153-SPD_0127"/>
<dbReference type="KEGG" id="spd:SPD_0127"/>
<dbReference type="eggNOG" id="COG0482">
    <property type="taxonomic scope" value="Bacteria"/>
</dbReference>
<dbReference type="HOGENOM" id="CLU_035188_1_0_9"/>
<dbReference type="BioCyc" id="SPNE373153:G1G6V-140-MONOMER"/>
<dbReference type="Proteomes" id="UP000001452">
    <property type="component" value="Chromosome"/>
</dbReference>
<dbReference type="GO" id="GO:0005737">
    <property type="term" value="C:cytoplasm"/>
    <property type="evidence" value="ECO:0007669"/>
    <property type="project" value="UniProtKB-SubCell"/>
</dbReference>
<dbReference type="GO" id="GO:0005524">
    <property type="term" value="F:ATP binding"/>
    <property type="evidence" value="ECO:0007669"/>
    <property type="project" value="UniProtKB-KW"/>
</dbReference>
<dbReference type="GO" id="GO:0000049">
    <property type="term" value="F:tRNA binding"/>
    <property type="evidence" value="ECO:0007669"/>
    <property type="project" value="UniProtKB-KW"/>
</dbReference>
<dbReference type="GO" id="GO:0103016">
    <property type="term" value="F:tRNA-uridine 2-sulfurtransferase activity"/>
    <property type="evidence" value="ECO:0007669"/>
    <property type="project" value="UniProtKB-EC"/>
</dbReference>
<dbReference type="GO" id="GO:0002143">
    <property type="term" value="P:tRNA wobble position uridine thiolation"/>
    <property type="evidence" value="ECO:0007669"/>
    <property type="project" value="TreeGrafter"/>
</dbReference>
<dbReference type="CDD" id="cd01998">
    <property type="entry name" value="MnmA_TRMU-like"/>
    <property type="match status" value="1"/>
</dbReference>
<dbReference type="FunFam" id="2.30.30.280:FF:000001">
    <property type="entry name" value="tRNA-specific 2-thiouridylase MnmA"/>
    <property type="match status" value="1"/>
</dbReference>
<dbReference type="FunFam" id="2.40.30.10:FF:000023">
    <property type="entry name" value="tRNA-specific 2-thiouridylase MnmA"/>
    <property type="match status" value="1"/>
</dbReference>
<dbReference type="FunFam" id="3.40.50.620:FF:000004">
    <property type="entry name" value="tRNA-specific 2-thiouridylase MnmA"/>
    <property type="match status" value="1"/>
</dbReference>
<dbReference type="Gene3D" id="2.30.30.280">
    <property type="entry name" value="Adenine nucleotide alpha hydrolases-like domains"/>
    <property type="match status" value="1"/>
</dbReference>
<dbReference type="Gene3D" id="3.40.50.620">
    <property type="entry name" value="HUPs"/>
    <property type="match status" value="1"/>
</dbReference>
<dbReference type="Gene3D" id="2.40.30.10">
    <property type="entry name" value="Translation factors"/>
    <property type="match status" value="1"/>
</dbReference>
<dbReference type="HAMAP" id="MF_00144">
    <property type="entry name" value="tRNA_thiouridyl_MnmA"/>
    <property type="match status" value="1"/>
</dbReference>
<dbReference type="InterPro" id="IPR004506">
    <property type="entry name" value="MnmA-like"/>
</dbReference>
<dbReference type="InterPro" id="IPR046885">
    <property type="entry name" value="MnmA-like_C"/>
</dbReference>
<dbReference type="InterPro" id="IPR046884">
    <property type="entry name" value="MnmA-like_central"/>
</dbReference>
<dbReference type="InterPro" id="IPR023382">
    <property type="entry name" value="MnmA-like_central_sf"/>
</dbReference>
<dbReference type="InterPro" id="IPR014729">
    <property type="entry name" value="Rossmann-like_a/b/a_fold"/>
</dbReference>
<dbReference type="NCBIfam" id="NF001138">
    <property type="entry name" value="PRK00143.1"/>
    <property type="match status" value="1"/>
</dbReference>
<dbReference type="NCBIfam" id="TIGR00420">
    <property type="entry name" value="trmU"/>
    <property type="match status" value="1"/>
</dbReference>
<dbReference type="PANTHER" id="PTHR11933:SF5">
    <property type="entry name" value="MITOCHONDRIAL TRNA-SPECIFIC 2-THIOURIDYLASE 1"/>
    <property type="match status" value="1"/>
</dbReference>
<dbReference type="PANTHER" id="PTHR11933">
    <property type="entry name" value="TRNA 5-METHYLAMINOMETHYL-2-THIOURIDYLATE -METHYLTRANSFERASE"/>
    <property type="match status" value="1"/>
</dbReference>
<dbReference type="Pfam" id="PF03054">
    <property type="entry name" value="tRNA_Me_trans"/>
    <property type="match status" value="1"/>
</dbReference>
<dbReference type="Pfam" id="PF20258">
    <property type="entry name" value="tRNA_Me_trans_C"/>
    <property type="match status" value="1"/>
</dbReference>
<dbReference type="Pfam" id="PF20259">
    <property type="entry name" value="tRNA_Me_trans_M"/>
    <property type="match status" value="1"/>
</dbReference>
<dbReference type="SUPFAM" id="SSF52402">
    <property type="entry name" value="Adenine nucleotide alpha hydrolases-like"/>
    <property type="match status" value="1"/>
</dbReference>
<feature type="chain" id="PRO_1000009586" description="tRNA-specific 2-thiouridylase MnmA">
    <location>
        <begin position="1"/>
        <end position="373"/>
    </location>
</feature>
<feature type="region of interest" description="Interaction with target base in tRNA" evidence="1">
    <location>
        <begin position="98"/>
        <end position="100"/>
    </location>
</feature>
<feature type="region of interest" description="Interaction with tRNA" evidence="1">
    <location>
        <begin position="150"/>
        <end position="152"/>
    </location>
</feature>
<feature type="region of interest" description="Interaction with tRNA" evidence="1">
    <location>
        <begin position="312"/>
        <end position="313"/>
    </location>
</feature>
<feature type="active site" description="Nucleophile" evidence="1">
    <location>
        <position position="103"/>
    </location>
</feature>
<feature type="active site" description="Cysteine persulfide intermediate" evidence="1">
    <location>
        <position position="200"/>
    </location>
</feature>
<feature type="binding site" evidence="1">
    <location>
        <begin position="12"/>
        <end position="19"/>
    </location>
    <ligand>
        <name>ATP</name>
        <dbReference type="ChEBI" id="CHEBI:30616"/>
    </ligand>
</feature>
<feature type="binding site" evidence="1">
    <location>
        <position position="38"/>
    </location>
    <ligand>
        <name>ATP</name>
        <dbReference type="ChEBI" id="CHEBI:30616"/>
    </ligand>
</feature>
<feature type="binding site" evidence="1">
    <location>
        <position position="127"/>
    </location>
    <ligand>
        <name>ATP</name>
        <dbReference type="ChEBI" id="CHEBI:30616"/>
    </ligand>
</feature>
<feature type="site" description="Interaction with tRNA" evidence="1">
    <location>
        <position position="128"/>
    </location>
</feature>
<feature type="site" description="Interaction with tRNA" evidence="1">
    <location>
        <position position="344"/>
    </location>
</feature>
<feature type="disulfide bond" description="Alternate" evidence="1">
    <location>
        <begin position="103"/>
        <end position="200"/>
    </location>
</feature>
<protein>
    <recommendedName>
        <fullName evidence="1">tRNA-specific 2-thiouridylase MnmA</fullName>
        <ecNumber evidence="1">2.8.1.13</ecNumber>
    </recommendedName>
</protein>
<accession>Q04MV1</accession>
<sequence>MSDNSKTRVVVGMSGGVDSSVTALLLKEQGYDVIGIFMKNWDDTDENGVCTATEDYKDVVAVADQIGIPYYSVNFEKEYWDRVFEYFLAEYRAGRTPNPDVMCNKEIKFKAFLDYAMTLGADYVATGHYARVARDEDGTVHMLRGVDNGKDQTYFLSQLSQEQLQKTMFPLGHLKKPEVRKLAEEAGLSTAKKKDSTGICFIGEKNFKNFLSNYLPAQPGRMMTVDGRDMGEHAGLMYYTIGQRGGLGIGGQHGGDNAPWFVVGKDLSKNILYVGQGFYHDSLMSTSLEASQVHFTREMPEEFTLECTAKFRYRQPDSKVTVHVKGDKAEVIFAEPQRAITPGQAVVFYDGEECLGGGLIDNAYRDGQVCQYI</sequence>
<comment type="function">
    <text evidence="1">Catalyzes the 2-thiolation of uridine at the wobble position (U34) of tRNA, leading to the formation of s(2)U34.</text>
</comment>
<comment type="catalytic activity">
    <reaction evidence="1">
        <text>S-sulfanyl-L-cysteinyl-[protein] + uridine(34) in tRNA + AH2 + ATP = 2-thiouridine(34) in tRNA + L-cysteinyl-[protein] + A + AMP + diphosphate + H(+)</text>
        <dbReference type="Rhea" id="RHEA:47032"/>
        <dbReference type="Rhea" id="RHEA-COMP:10131"/>
        <dbReference type="Rhea" id="RHEA-COMP:11726"/>
        <dbReference type="Rhea" id="RHEA-COMP:11727"/>
        <dbReference type="Rhea" id="RHEA-COMP:11728"/>
        <dbReference type="ChEBI" id="CHEBI:13193"/>
        <dbReference type="ChEBI" id="CHEBI:15378"/>
        <dbReference type="ChEBI" id="CHEBI:17499"/>
        <dbReference type="ChEBI" id="CHEBI:29950"/>
        <dbReference type="ChEBI" id="CHEBI:30616"/>
        <dbReference type="ChEBI" id="CHEBI:33019"/>
        <dbReference type="ChEBI" id="CHEBI:61963"/>
        <dbReference type="ChEBI" id="CHEBI:65315"/>
        <dbReference type="ChEBI" id="CHEBI:87170"/>
        <dbReference type="ChEBI" id="CHEBI:456215"/>
        <dbReference type="EC" id="2.8.1.13"/>
    </reaction>
</comment>
<comment type="subcellular location">
    <subcellularLocation>
        <location evidence="1">Cytoplasm</location>
    </subcellularLocation>
</comment>
<comment type="similarity">
    <text evidence="1">Belongs to the MnmA/TRMU family.</text>
</comment>